<dbReference type="EMBL" id="BX005450">
    <property type="protein sequence ID" value="CAQ14404.1"/>
    <property type="molecule type" value="Genomic_DNA"/>
</dbReference>
<dbReference type="EMBL" id="CR388090">
    <property type="protein sequence ID" value="CAQ14404.1"/>
    <property type="status" value="JOINED"/>
    <property type="molecule type" value="Genomic_DNA"/>
</dbReference>
<dbReference type="SMR" id="B0S5A7"/>
<dbReference type="FunCoup" id="B0S5A7">
    <property type="interactions" value="1460"/>
</dbReference>
<dbReference type="STRING" id="7955.ENSDARP00000074529"/>
<dbReference type="GlyCosmos" id="B0S5A7">
    <property type="glycosylation" value="4 sites, No reported glycans"/>
</dbReference>
<dbReference type="PaxDb" id="7955-ENSDARP00000074529"/>
<dbReference type="PeptideAtlas" id="B0S5A7"/>
<dbReference type="eggNOG" id="KOG1362">
    <property type="taxonomic scope" value="Eukaryota"/>
</dbReference>
<dbReference type="InParanoid" id="B0S5A7"/>
<dbReference type="PhylomeDB" id="B0S5A7"/>
<dbReference type="Proteomes" id="UP000000437">
    <property type="component" value="Unplaced"/>
</dbReference>
<dbReference type="GO" id="GO:0016020">
    <property type="term" value="C:membrane"/>
    <property type="evidence" value="ECO:0000318"/>
    <property type="project" value="GO_Central"/>
</dbReference>
<dbReference type="GO" id="GO:0005886">
    <property type="term" value="C:plasma membrane"/>
    <property type="evidence" value="ECO:0000250"/>
    <property type="project" value="UniProtKB"/>
</dbReference>
<dbReference type="GO" id="GO:0015297">
    <property type="term" value="F:antiporter activity"/>
    <property type="evidence" value="ECO:0007669"/>
    <property type="project" value="UniProtKB-KW"/>
</dbReference>
<dbReference type="GO" id="GO:0015220">
    <property type="term" value="F:choline transmembrane transporter activity"/>
    <property type="evidence" value="ECO:0000250"/>
    <property type="project" value="UniProtKB"/>
</dbReference>
<dbReference type="GO" id="GO:0022857">
    <property type="term" value="F:transmembrane transporter activity"/>
    <property type="evidence" value="ECO:0000318"/>
    <property type="project" value="GO_Central"/>
</dbReference>
<dbReference type="GO" id="GO:0015871">
    <property type="term" value="P:choline transport"/>
    <property type="evidence" value="ECO:0000250"/>
    <property type="project" value="UniProtKB"/>
</dbReference>
<dbReference type="GO" id="GO:0055085">
    <property type="term" value="P:transmembrane transport"/>
    <property type="evidence" value="ECO:0000318"/>
    <property type="project" value="GO_Central"/>
</dbReference>
<dbReference type="InterPro" id="IPR007603">
    <property type="entry name" value="Choline_transptr-like"/>
</dbReference>
<dbReference type="PANTHER" id="PTHR12385">
    <property type="entry name" value="CHOLINE TRANSPORTER-LIKE (SLC FAMILY 44)"/>
    <property type="match status" value="1"/>
</dbReference>
<dbReference type="PANTHER" id="PTHR12385:SF42">
    <property type="entry name" value="CHOLINE TRANSPORTER-LIKE PROTEIN 5"/>
    <property type="match status" value="1"/>
</dbReference>
<dbReference type="Pfam" id="PF04515">
    <property type="entry name" value="Choline_transpo"/>
    <property type="match status" value="1"/>
</dbReference>
<keyword id="KW-0050">Antiport</keyword>
<keyword id="KW-1003">Cell membrane</keyword>
<keyword id="KW-0325">Glycoprotein</keyword>
<keyword id="KW-0472">Membrane</keyword>
<keyword id="KW-1185">Reference proteome</keyword>
<keyword id="KW-0812">Transmembrane</keyword>
<keyword id="KW-1133">Transmembrane helix</keyword>
<keyword id="KW-0813">Transport</keyword>
<sequence>GCTDVLCCVIFVIVILGYIVLGTVAWMHGDPRKVVYPTDSYGQFCGQQETPNANKAILFYFNILQCANPSVLINLQCPTTQLCVSKCPDRFATYIDMQYSYRRNKGSWEYYKQFCKPGFNNPDKPISQVLRDEDCPSMIVPSRPFLQRCFPDFITRNGTLTVANQTSFKDGHGKIRSVVDLRDAANGITSLLDAKEVGTKIFEDYASSWFWILIGLVISMLVSLVFILLLRFTAGVLFWLVIFGVIAAVGYGIWHCYWEYSSLKGKPDSDVTISDIGFQTDFRVYLQLSQTWLIFMTSLAVIEAIIILVLIFLRNRVRIAIALLKEGSKAIGCIMSTLFYPIITFLLLALCIAYWAVTAVFLASSGEAVYKVMSTLPDCKYTNLTCDPETFSQSNVTKLCPGSQCTFAFYGGESLYHRYIFVLQLCNLLVFLWLVNFTIALGQCTLAGAFAAYYWALRKPADIPPCPLASSFGRALRYHTGSLAFGALILSIVQFIRIILEYLDHKLKGAHNAFTRFLLCCLKCCFWCLEHFIKFMNRNAYIMISIYGKNFCTSARDAFFLLMRNVMRVAVLDKVTDFLLFLGKLLISGSVGVLAFFFFTRQIPVIQEEVPSLNYYWVPLLTVIFGSYMIAHGFFNVYAMCVDTLFLCFLLDLEKNDGSATRPYYMCSSLRAILNKKNQKRPKETKRGRKQKKEQPKSRH</sequence>
<name>CTL5B_DANRE</name>
<reference key="1">
    <citation type="journal article" date="2013" name="Nature">
        <title>The zebrafish reference genome sequence and its relationship to the human genome.</title>
        <authorList>
            <person name="Howe K."/>
            <person name="Clark M.D."/>
            <person name="Torroja C.F."/>
            <person name="Torrance J."/>
            <person name="Berthelot C."/>
            <person name="Muffato M."/>
            <person name="Collins J.E."/>
            <person name="Humphray S."/>
            <person name="McLaren K."/>
            <person name="Matthews L."/>
            <person name="McLaren S."/>
            <person name="Sealy I."/>
            <person name="Caccamo M."/>
            <person name="Churcher C."/>
            <person name="Scott C."/>
            <person name="Barrett J.C."/>
            <person name="Koch R."/>
            <person name="Rauch G.J."/>
            <person name="White S."/>
            <person name="Chow W."/>
            <person name="Kilian B."/>
            <person name="Quintais L.T."/>
            <person name="Guerra-Assuncao J.A."/>
            <person name="Zhou Y."/>
            <person name="Gu Y."/>
            <person name="Yen J."/>
            <person name="Vogel J.H."/>
            <person name="Eyre T."/>
            <person name="Redmond S."/>
            <person name="Banerjee R."/>
            <person name="Chi J."/>
            <person name="Fu B."/>
            <person name="Langley E."/>
            <person name="Maguire S.F."/>
            <person name="Laird G.K."/>
            <person name="Lloyd D."/>
            <person name="Kenyon E."/>
            <person name="Donaldson S."/>
            <person name="Sehra H."/>
            <person name="Almeida-King J."/>
            <person name="Loveland J."/>
            <person name="Trevanion S."/>
            <person name="Jones M."/>
            <person name="Quail M."/>
            <person name="Willey D."/>
            <person name="Hunt A."/>
            <person name="Burton J."/>
            <person name="Sims S."/>
            <person name="McLay K."/>
            <person name="Plumb B."/>
            <person name="Davis J."/>
            <person name="Clee C."/>
            <person name="Oliver K."/>
            <person name="Clark R."/>
            <person name="Riddle C."/>
            <person name="Elliot D."/>
            <person name="Threadgold G."/>
            <person name="Harden G."/>
            <person name="Ware D."/>
            <person name="Begum S."/>
            <person name="Mortimore B."/>
            <person name="Kerry G."/>
            <person name="Heath P."/>
            <person name="Phillimore B."/>
            <person name="Tracey A."/>
            <person name="Corby N."/>
            <person name="Dunn M."/>
            <person name="Johnson C."/>
            <person name="Wood J."/>
            <person name="Clark S."/>
            <person name="Pelan S."/>
            <person name="Griffiths G."/>
            <person name="Smith M."/>
            <person name="Glithero R."/>
            <person name="Howden P."/>
            <person name="Barker N."/>
            <person name="Lloyd C."/>
            <person name="Stevens C."/>
            <person name="Harley J."/>
            <person name="Holt K."/>
            <person name="Panagiotidis G."/>
            <person name="Lovell J."/>
            <person name="Beasley H."/>
            <person name="Henderson C."/>
            <person name="Gordon D."/>
            <person name="Auger K."/>
            <person name="Wright D."/>
            <person name="Collins J."/>
            <person name="Raisen C."/>
            <person name="Dyer L."/>
            <person name="Leung K."/>
            <person name="Robertson L."/>
            <person name="Ambridge K."/>
            <person name="Leongamornlert D."/>
            <person name="McGuire S."/>
            <person name="Gilderthorp R."/>
            <person name="Griffiths C."/>
            <person name="Manthravadi D."/>
            <person name="Nichol S."/>
            <person name="Barker G."/>
            <person name="Whitehead S."/>
            <person name="Kay M."/>
            <person name="Brown J."/>
            <person name="Murnane C."/>
            <person name="Gray E."/>
            <person name="Humphries M."/>
            <person name="Sycamore N."/>
            <person name="Barker D."/>
            <person name="Saunders D."/>
            <person name="Wallis J."/>
            <person name="Babbage A."/>
            <person name="Hammond S."/>
            <person name="Mashreghi-Mohammadi M."/>
            <person name="Barr L."/>
            <person name="Martin S."/>
            <person name="Wray P."/>
            <person name="Ellington A."/>
            <person name="Matthews N."/>
            <person name="Ellwood M."/>
            <person name="Woodmansey R."/>
            <person name="Clark G."/>
            <person name="Cooper J."/>
            <person name="Tromans A."/>
            <person name="Grafham D."/>
            <person name="Skuce C."/>
            <person name="Pandian R."/>
            <person name="Andrews R."/>
            <person name="Harrison E."/>
            <person name="Kimberley A."/>
            <person name="Garnett J."/>
            <person name="Fosker N."/>
            <person name="Hall R."/>
            <person name="Garner P."/>
            <person name="Kelly D."/>
            <person name="Bird C."/>
            <person name="Palmer S."/>
            <person name="Gehring I."/>
            <person name="Berger A."/>
            <person name="Dooley C.M."/>
            <person name="Ersan-Urun Z."/>
            <person name="Eser C."/>
            <person name="Geiger H."/>
            <person name="Geisler M."/>
            <person name="Karotki L."/>
            <person name="Kirn A."/>
            <person name="Konantz J."/>
            <person name="Konantz M."/>
            <person name="Oberlander M."/>
            <person name="Rudolph-Geiger S."/>
            <person name="Teucke M."/>
            <person name="Lanz C."/>
            <person name="Raddatz G."/>
            <person name="Osoegawa K."/>
            <person name="Zhu B."/>
            <person name="Rapp A."/>
            <person name="Widaa S."/>
            <person name="Langford C."/>
            <person name="Yang F."/>
            <person name="Schuster S.C."/>
            <person name="Carter N.P."/>
            <person name="Harrow J."/>
            <person name="Ning Z."/>
            <person name="Herrero J."/>
            <person name="Searle S.M."/>
            <person name="Enright A."/>
            <person name="Geisler R."/>
            <person name="Plasterk R.H."/>
            <person name="Lee C."/>
            <person name="Westerfield M."/>
            <person name="de Jong P.J."/>
            <person name="Zon L.I."/>
            <person name="Postlethwait J.H."/>
            <person name="Nusslein-Volhard C."/>
            <person name="Hubbard T.J."/>
            <person name="Roest Crollius H."/>
            <person name="Rogers J."/>
            <person name="Stemple D.L."/>
        </authorList>
    </citation>
    <scope>NUCLEOTIDE SEQUENCE [LARGE SCALE GENOMIC DNA]</scope>
    <source>
        <strain>Tuebingen</strain>
    </source>
</reference>
<comment type="function">
    <text evidence="1">Choline/H+ antiporter.</text>
</comment>
<comment type="catalytic activity">
    <reaction evidence="1">
        <text>choline(out) + n H(+)(in) = choline(in) + n H(+)(out)</text>
        <dbReference type="Rhea" id="RHEA:75463"/>
        <dbReference type="ChEBI" id="CHEBI:15354"/>
        <dbReference type="ChEBI" id="CHEBI:15378"/>
    </reaction>
</comment>
<comment type="subcellular location">
    <subcellularLocation>
        <location evidence="1">Cell membrane</location>
        <topology evidence="2">Multi-pass membrane protein</topology>
    </subcellularLocation>
</comment>
<comment type="similarity">
    <text evidence="4">Belongs to the CTL (choline transporter-like) family.</text>
</comment>
<evidence type="ECO:0000250" key="1">
    <source>
        <dbReference type="UniProtKB" id="Q8NCS7"/>
    </source>
</evidence>
<evidence type="ECO:0000255" key="2"/>
<evidence type="ECO:0000256" key="3">
    <source>
        <dbReference type="SAM" id="MobiDB-lite"/>
    </source>
</evidence>
<evidence type="ECO:0000305" key="4"/>
<feature type="chain" id="PRO_0000359725" description="Choline transporter-like protein 5-B">
    <location>
        <begin position="1" status="less than"/>
        <end position="700"/>
    </location>
</feature>
<feature type="topological domain" description="Cytoplasmic" evidence="2">
    <location>
        <begin position="1" status="less than"/>
        <end position="4"/>
    </location>
</feature>
<feature type="transmembrane region" description="Helical" evidence="2">
    <location>
        <begin position="5"/>
        <end position="25"/>
    </location>
</feature>
<feature type="topological domain" description="Extracellular" evidence="2">
    <location>
        <begin position="26"/>
        <end position="209"/>
    </location>
</feature>
<feature type="transmembrane region" description="Helical" evidence="2">
    <location>
        <begin position="210"/>
        <end position="230"/>
    </location>
</feature>
<feature type="topological domain" description="Cytoplasmic" evidence="2">
    <location>
        <begin position="231"/>
        <end position="233"/>
    </location>
</feature>
<feature type="transmembrane region" description="Helical" evidence="2">
    <location>
        <begin position="234"/>
        <end position="254"/>
    </location>
</feature>
<feature type="topological domain" description="Extracellular" evidence="2">
    <location>
        <begin position="255"/>
        <end position="292"/>
    </location>
</feature>
<feature type="transmembrane region" description="Helical" evidence="2">
    <location>
        <begin position="293"/>
        <end position="313"/>
    </location>
</feature>
<feature type="topological domain" description="Cytoplasmic" evidence="2">
    <location>
        <begin position="314"/>
        <end position="341"/>
    </location>
</feature>
<feature type="transmembrane region" description="Helical" evidence="2">
    <location>
        <begin position="342"/>
        <end position="362"/>
    </location>
</feature>
<feature type="topological domain" description="Extracellular" evidence="2">
    <location>
        <begin position="363"/>
        <end position="432"/>
    </location>
</feature>
<feature type="transmembrane region" description="Helical" evidence="2">
    <location>
        <begin position="433"/>
        <end position="455"/>
    </location>
</feature>
<feature type="topological domain" description="Cytoplasmic" evidence="2">
    <location>
        <begin position="456"/>
        <end position="482"/>
    </location>
</feature>
<feature type="transmembrane region" description="Helical" evidence="2">
    <location>
        <begin position="483"/>
        <end position="503"/>
    </location>
</feature>
<feature type="topological domain" description="Extracellular" evidence="2">
    <location>
        <begin position="504"/>
        <end position="541"/>
    </location>
</feature>
<feature type="transmembrane region" description="Helical" evidence="2">
    <location>
        <begin position="542"/>
        <end position="562"/>
    </location>
</feature>
<feature type="topological domain" description="Cytoplasmic" evidence="2">
    <location>
        <begin position="563"/>
        <end position="577"/>
    </location>
</feature>
<feature type="transmembrane region" description="Helical" evidence="2">
    <location>
        <begin position="578"/>
        <end position="598"/>
    </location>
</feature>
<feature type="topological domain" description="Extracellular" evidence="2">
    <location>
        <begin position="599"/>
        <end position="616"/>
    </location>
</feature>
<feature type="transmembrane region" description="Helical" evidence="2">
    <location>
        <begin position="617"/>
        <end position="637"/>
    </location>
</feature>
<feature type="topological domain" description="Cytoplasmic" evidence="2">
    <location>
        <begin position="638"/>
        <end position="687"/>
    </location>
</feature>
<feature type="region of interest" description="Disordered" evidence="3">
    <location>
        <begin position="676"/>
        <end position="700"/>
    </location>
</feature>
<feature type="compositionally biased region" description="Basic residues" evidence="3">
    <location>
        <begin position="677"/>
        <end position="692"/>
    </location>
</feature>
<feature type="glycosylation site" description="N-linked (GlcNAc...) asparagine" evidence="2">
    <location>
        <position position="157"/>
    </location>
</feature>
<feature type="glycosylation site" description="N-linked (GlcNAc...) asparagine" evidence="2">
    <location>
        <position position="164"/>
    </location>
</feature>
<feature type="glycosylation site" description="N-linked (GlcNAc...) asparagine" evidence="2">
    <location>
        <position position="383"/>
    </location>
</feature>
<feature type="glycosylation site" description="N-linked (GlcNAc...) asparagine" evidence="2">
    <location>
        <position position="395"/>
    </location>
</feature>
<feature type="non-terminal residue">
    <location>
        <position position="1"/>
    </location>
</feature>
<proteinExistence type="inferred from homology"/>
<organism>
    <name type="scientific">Danio rerio</name>
    <name type="common">Zebrafish</name>
    <name type="synonym">Brachydanio rerio</name>
    <dbReference type="NCBI Taxonomy" id="7955"/>
    <lineage>
        <taxon>Eukaryota</taxon>
        <taxon>Metazoa</taxon>
        <taxon>Chordata</taxon>
        <taxon>Craniata</taxon>
        <taxon>Vertebrata</taxon>
        <taxon>Euteleostomi</taxon>
        <taxon>Actinopterygii</taxon>
        <taxon>Neopterygii</taxon>
        <taxon>Teleostei</taxon>
        <taxon>Ostariophysi</taxon>
        <taxon>Cypriniformes</taxon>
        <taxon>Danionidae</taxon>
        <taxon>Danioninae</taxon>
        <taxon>Danio</taxon>
    </lineage>
</organism>
<protein>
    <recommendedName>
        <fullName>Choline transporter-like protein 5-B</fullName>
    </recommendedName>
    <alternativeName>
        <fullName>Solute carrier family 44 member 5-B</fullName>
    </alternativeName>
</protein>
<gene>
    <name type="primary">slc44a5b</name>
    <name type="synonym">ctl5b</name>
    <name type="ORF">si:dkey-267j14.1</name>
</gene>
<accession>B0S5A7</accession>